<comment type="catalytic activity">
    <reaction evidence="1">
        <text>tRNA(Cys) + L-cysteine + ATP = L-cysteinyl-tRNA(Cys) + AMP + diphosphate</text>
        <dbReference type="Rhea" id="RHEA:17773"/>
        <dbReference type="Rhea" id="RHEA-COMP:9661"/>
        <dbReference type="Rhea" id="RHEA-COMP:9679"/>
        <dbReference type="ChEBI" id="CHEBI:30616"/>
        <dbReference type="ChEBI" id="CHEBI:33019"/>
        <dbReference type="ChEBI" id="CHEBI:35235"/>
        <dbReference type="ChEBI" id="CHEBI:78442"/>
        <dbReference type="ChEBI" id="CHEBI:78517"/>
        <dbReference type="ChEBI" id="CHEBI:456215"/>
        <dbReference type="EC" id="6.1.1.16"/>
    </reaction>
</comment>
<comment type="cofactor">
    <cofactor evidence="1">
        <name>Zn(2+)</name>
        <dbReference type="ChEBI" id="CHEBI:29105"/>
    </cofactor>
    <text evidence="1">Binds 1 zinc ion per subunit.</text>
</comment>
<comment type="subunit">
    <text evidence="1">Monomer.</text>
</comment>
<comment type="subcellular location">
    <subcellularLocation>
        <location evidence="1">Cytoplasm</location>
    </subcellularLocation>
</comment>
<comment type="similarity">
    <text evidence="1">Belongs to the class-I aminoacyl-tRNA synthetase family.</text>
</comment>
<keyword id="KW-0030">Aminoacyl-tRNA synthetase</keyword>
<keyword id="KW-0067">ATP-binding</keyword>
<keyword id="KW-0963">Cytoplasm</keyword>
<keyword id="KW-0436">Ligase</keyword>
<keyword id="KW-0479">Metal-binding</keyword>
<keyword id="KW-0547">Nucleotide-binding</keyword>
<keyword id="KW-0648">Protein biosynthesis</keyword>
<keyword id="KW-0862">Zinc</keyword>
<accession>B8E5F2</accession>
<protein>
    <recommendedName>
        <fullName evidence="1">Cysteine--tRNA ligase</fullName>
        <ecNumber evidence="1">6.1.1.16</ecNumber>
    </recommendedName>
    <alternativeName>
        <fullName evidence="1">Cysteinyl-tRNA synthetase</fullName>
        <shortName evidence="1">CysRS</shortName>
    </alternativeName>
</protein>
<reference key="1">
    <citation type="submission" date="2008-12" db="EMBL/GenBank/DDBJ databases">
        <title>Complete sequence of chromosome of Shewanella baltica OS223.</title>
        <authorList>
            <consortium name="US DOE Joint Genome Institute"/>
            <person name="Lucas S."/>
            <person name="Copeland A."/>
            <person name="Lapidus A."/>
            <person name="Glavina del Rio T."/>
            <person name="Dalin E."/>
            <person name="Tice H."/>
            <person name="Bruce D."/>
            <person name="Goodwin L."/>
            <person name="Pitluck S."/>
            <person name="Chertkov O."/>
            <person name="Meincke L."/>
            <person name="Brettin T."/>
            <person name="Detter J.C."/>
            <person name="Han C."/>
            <person name="Kuske C.R."/>
            <person name="Larimer F."/>
            <person name="Land M."/>
            <person name="Hauser L."/>
            <person name="Kyrpides N."/>
            <person name="Ovchinnikova G."/>
            <person name="Brettar I."/>
            <person name="Rodrigues J."/>
            <person name="Konstantinidis K."/>
            <person name="Tiedje J."/>
        </authorList>
    </citation>
    <scope>NUCLEOTIDE SEQUENCE [LARGE SCALE GENOMIC DNA]</scope>
    <source>
        <strain>OS223</strain>
    </source>
</reference>
<sequence>MLKIYNSITRQKQEFKPITPGKIGMYVCGVTIYDLCHIGHGRTFVSFDMIVRYLRYAGYEVNFQRNITDVDDKIIKRANENNESCEALTERLIGEMHQDFDALNMLRPDFEPRATLHIAEIIDMVELLLARGHAYVASDGDVLFSVASYPDYGRLSGQNLDQLQAGARVEVDETKQNPMDFVLWKMSKPGEPTWESPWGPGRPGWHIECSAMNSKHLGLHFDIHGGGSDLQFPHHENEIAQSCCAHDTPYVNYWMHTGMVMVDREKMSKSLGNFFTIRDVLGHYDAETVRYFLLSGHYRSQLNYSEDNLKQARSALERLYTAIKDVDLTVAAAPAEEFVAKFKAAMDDDFNTPEAYSVLFDMVREINRLKLTDMAQASALAVTLKQLADVLGLLSQEPEAFFQGGGSDDEVAEIEALIVERNRARTEKDWAAADVARNRLNELGVELEDSPSGTTWRKK</sequence>
<proteinExistence type="inferred from homology"/>
<gene>
    <name evidence="1" type="primary">cysS</name>
    <name type="ordered locus">Sbal223_2753</name>
</gene>
<organism>
    <name type="scientific">Shewanella baltica (strain OS223)</name>
    <dbReference type="NCBI Taxonomy" id="407976"/>
    <lineage>
        <taxon>Bacteria</taxon>
        <taxon>Pseudomonadati</taxon>
        <taxon>Pseudomonadota</taxon>
        <taxon>Gammaproteobacteria</taxon>
        <taxon>Alteromonadales</taxon>
        <taxon>Shewanellaceae</taxon>
        <taxon>Shewanella</taxon>
    </lineage>
</organism>
<feature type="chain" id="PRO_1000117305" description="Cysteine--tRNA ligase">
    <location>
        <begin position="1"/>
        <end position="459"/>
    </location>
</feature>
<feature type="short sequence motif" description="'HIGH' region">
    <location>
        <begin position="30"/>
        <end position="40"/>
    </location>
</feature>
<feature type="short sequence motif" description="'KMSKS' region">
    <location>
        <begin position="266"/>
        <end position="270"/>
    </location>
</feature>
<feature type="binding site" evidence="1">
    <location>
        <position position="28"/>
    </location>
    <ligand>
        <name>Zn(2+)</name>
        <dbReference type="ChEBI" id="CHEBI:29105"/>
    </ligand>
</feature>
<feature type="binding site" evidence="1">
    <location>
        <position position="209"/>
    </location>
    <ligand>
        <name>Zn(2+)</name>
        <dbReference type="ChEBI" id="CHEBI:29105"/>
    </ligand>
</feature>
<feature type="binding site" evidence="1">
    <location>
        <position position="234"/>
    </location>
    <ligand>
        <name>Zn(2+)</name>
        <dbReference type="ChEBI" id="CHEBI:29105"/>
    </ligand>
</feature>
<feature type="binding site" evidence="1">
    <location>
        <position position="238"/>
    </location>
    <ligand>
        <name>Zn(2+)</name>
        <dbReference type="ChEBI" id="CHEBI:29105"/>
    </ligand>
</feature>
<feature type="binding site" evidence="1">
    <location>
        <position position="269"/>
    </location>
    <ligand>
        <name>ATP</name>
        <dbReference type="ChEBI" id="CHEBI:30616"/>
    </ligand>
</feature>
<dbReference type="EC" id="6.1.1.16" evidence="1"/>
<dbReference type="EMBL" id="CP001252">
    <property type="protein sequence ID" value="ACK47241.1"/>
    <property type="molecule type" value="Genomic_DNA"/>
</dbReference>
<dbReference type="RefSeq" id="WP_012588028.1">
    <property type="nucleotide sequence ID" value="NC_011663.1"/>
</dbReference>
<dbReference type="SMR" id="B8E5F2"/>
<dbReference type="KEGG" id="sbp:Sbal223_2753"/>
<dbReference type="HOGENOM" id="CLU_013528_0_1_6"/>
<dbReference type="Proteomes" id="UP000002507">
    <property type="component" value="Chromosome"/>
</dbReference>
<dbReference type="GO" id="GO:0005829">
    <property type="term" value="C:cytosol"/>
    <property type="evidence" value="ECO:0007669"/>
    <property type="project" value="TreeGrafter"/>
</dbReference>
<dbReference type="GO" id="GO:0005524">
    <property type="term" value="F:ATP binding"/>
    <property type="evidence" value="ECO:0007669"/>
    <property type="project" value="UniProtKB-UniRule"/>
</dbReference>
<dbReference type="GO" id="GO:0004817">
    <property type="term" value="F:cysteine-tRNA ligase activity"/>
    <property type="evidence" value="ECO:0007669"/>
    <property type="project" value="UniProtKB-UniRule"/>
</dbReference>
<dbReference type="GO" id="GO:0008270">
    <property type="term" value="F:zinc ion binding"/>
    <property type="evidence" value="ECO:0007669"/>
    <property type="project" value="UniProtKB-UniRule"/>
</dbReference>
<dbReference type="GO" id="GO:0006423">
    <property type="term" value="P:cysteinyl-tRNA aminoacylation"/>
    <property type="evidence" value="ECO:0007669"/>
    <property type="project" value="UniProtKB-UniRule"/>
</dbReference>
<dbReference type="CDD" id="cd07963">
    <property type="entry name" value="Anticodon_Ia_Cys"/>
    <property type="match status" value="1"/>
</dbReference>
<dbReference type="CDD" id="cd00672">
    <property type="entry name" value="CysRS_core"/>
    <property type="match status" value="1"/>
</dbReference>
<dbReference type="FunFam" id="1.20.120.1910:FF:000001">
    <property type="entry name" value="Cysteine--tRNA ligase"/>
    <property type="match status" value="1"/>
</dbReference>
<dbReference type="FunFam" id="3.40.50.620:FF:000009">
    <property type="entry name" value="Cysteine--tRNA ligase"/>
    <property type="match status" value="1"/>
</dbReference>
<dbReference type="Gene3D" id="1.20.120.1910">
    <property type="entry name" value="Cysteine-tRNA ligase, C-terminal anti-codon recognition domain"/>
    <property type="match status" value="1"/>
</dbReference>
<dbReference type="Gene3D" id="3.40.50.620">
    <property type="entry name" value="HUPs"/>
    <property type="match status" value="1"/>
</dbReference>
<dbReference type="HAMAP" id="MF_00041">
    <property type="entry name" value="Cys_tRNA_synth"/>
    <property type="match status" value="1"/>
</dbReference>
<dbReference type="InterPro" id="IPR015803">
    <property type="entry name" value="Cys-tRNA-ligase"/>
</dbReference>
<dbReference type="InterPro" id="IPR015273">
    <property type="entry name" value="Cys-tRNA-synt_Ia_DALR"/>
</dbReference>
<dbReference type="InterPro" id="IPR024909">
    <property type="entry name" value="Cys-tRNA/MSH_ligase"/>
</dbReference>
<dbReference type="InterPro" id="IPR056411">
    <property type="entry name" value="CysS_C"/>
</dbReference>
<dbReference type="InterPro" id="IPR014729">
    <property type="entry name" value="Rossmann-like_a/b/a_fold"/>
</dbReference>
<dbReference type="InterPro" id="IPR032678">
    <property type="entry name" value="tRNA-synt_1_cat_dom"/>
</dbReference>
<dbReference type="InterPro" id="IPR009080">
    <property type="entry name" value="tRNAsynth_Ia_anticodon-bd"/>
</dbReference>
<dbReference type="NCBIfam" id="TIGR00435">
    <property type="entry name" value="cysS"/>
    <property type="match status" value="1"/>
</dbReference>
<dbReference type="PANTHER" id="PTHR10890:SF3">
    <property type="entry name" value="CYSTEINE--TRNA LIGASE, CYTOPLASMIC"/>
    <property type="match status" value="1"/>
</dbReference>
<dbReference type="PANTHER" id="PTHR10890">
    <property type="entry name" value="CYSTEINYL-TRNA SYNTHETASE"/>
    <property type="match status" value="1"/>
</dbReference>
<dbReference type="Pfam" id="PF23493">
    <property type="entry name" value="CysS_C"/>
    <property type="match status" value="1"/>
</dbReference>
<dbReference type="Pfam" id="PF09190">
    <property type="entry name" value="DALR_2"/>
    <property type="match status" value="1"/>
</dbReference>
<dbReference type="Pfam" id="PF01406">
    <property type="entry name" value="tRNA-synt_1e"/>
    <property type="match status" value="1"/>
</dbReference>
<dbReference type="PRINTS" id="PR00983">
    <property type="entry name" value="TRNASYNTHCYS"/>
</dbReference>
<dbReference type="SMART" id="SM00840">
    <property type="entry name" value="DALR_2"/>
    <property type="match status" value="1"/>
</dbReference>
<dbReference type="SUPFAM" id="SSF47323">
    <property type="entry name" value="Anticodon-binding domain of a subclass of class I aminoacyl-tRNA synthetases"/>
    <property type="match status" value="1"/>
</dbReference>
<dbReference type="SUPFAM" id="SSF52374">
    <property type="entry name" value="Nucleotidylyl transferase"/>
    <property type="match status" value="1"/>
</dbReference>
<name>SYC_SHEB2</name>
<evidence type="ECO:0000255" key="1">
    <source>
        <dbReference type="HAMAP-Rule" id="MF_00041"/>
    </source>
</evidence>